<protein>
    <recommendedName>
        <fullName evidence="6">Forkhead transcription factor fkh-6</fullName>
    </recommendedName>
</protein>
<feature type="chain" id="PRO_0000454565" description="Forkhead transcription factor fkh-6">
    <location>
        <begin position="1"/>
        <end position="323"/>
    </location>
</feature>
<feature type="DNA-binding region" description="Fork-head" evidence="1">
    <location>
        <begin position="21"/>
        <end position="122"/>
    </location>
</feature>
<feature type="mutagenesis site" description="In ez16; defects in gonad morphology; failure to elongate normally and feminization of male (X0) gonad, such as developing a vulva, are the most drastic and most frequent abnormalities. Hermaphrodites are infertile. Abolishes expression of homeobox egl-5 in somatic gonadal precursor cells, Z1 and Z4, during larval L1 stage." evidence="2 3">
    <original>M</original>
    <variation>I</variation>
    <location>
        <position position="1"/>
    </location>
</feature>
<name>FKH6_CAEEL</name>
<dbReference type="EMBL" id="BX284602">
    <property type="protein sequence ID" value="CCD61668.1"/>
    <property type="molecule type" value="Genomic_DNA"/>
</dbReference>
<dbReference type="PIR" id="T15311">
    <property type="entry name" value="T15311"/>
</dbReference>
<dbReference type="RefSeq" id="NP_494775.1">
    <property type="nucleotide sequence ID" value="NM_062374.3"/>
</dbReference>
<dbReference type="SMR" id="Q10924"/>
<dbReference type="FunCoup" id="Q10924">
    <property type="interactions" value="138"/>
</dbReference>
<dbReference type="IntAct" id="Q10924">
    <property type="interactions" value="54"/>
</dbReference>
<dbReference type="STRING" id="6239.B0286.5.1"/>
<dbReference type="PaxDb" id="6239-B0286.5"/>
<dbReference type="EnsemblMetazoa" id="B0286.5.1">
    <property type="protein sequence ID" value="B0286.5.1"/>
    <property type="gene ID" value="WBGene00001438"/>
</dbReference>
<dbReference type="GeneID" id="181907"/>
<dbReference type="KEGG" id="cel:CELE_B0286.5"/>
<dbReference type="UCSC" id="B0286.5">
    <property type="organism name" value="c. elegans"/>
</dbReference>
<dbReference type="AGR" id="WB:WBGene00001438"/>
<dbReference type="CTD" id="181907"/>
<dbReference type="WormBase" id="B0286.5">
    <property type="protein sequence ID" value="CE03865"/>
    <property type="gene ID" value="WBGene00001438"/>
    <property type="gene designation" value="fkh-6"/>
</dbReference>
<dbReference type="eggNOG" id="KOG2294">
    <property type="taxonomic scope" value="Eukaryota"/>
</dbReference>
<dbReference type="GeneTree" id="ENSGT00940000173882"/>
<dbReference type="HOGENOM" id="CLU_850554_0_0_1"/>
<dbReference type="InParanoid" id="Q10924"/>
<dbReference type="OMA" id="GQSCAND"/>
<dbReference type="OrthoDB" id="5402974at2759"/>
<dbReference type="PRO" id="PR:Q10924"/>
<dbReference type="Proteomes" id="UP000001940">
    <property type="component" value="Chromosome II"/>
</dbReference>
<dbReference type="Bgee" id="WBGene00001438">
    <property type="expression patterns" value="Expressed in pharyngeal muscle cell (C elegans) and 3 other cell types or tissues"/>
</dbReference>
<dbReference type="GO" id="GO:0005634">
    <property type="term" value="C:nucleus"/>
    <property type="evidence" value="ECO:0000305"/>
    <property type="project" value="WormBase"/>
</dbReference>
<dbReference type="GO" id="GO:0000981">
    <property type="term" value="F:DNA-binding transcription factor activity, RNA polymerase II-specific"/>
    <property type="evidence" value="ECO:0000318"/>
    <property type="project" value="GO_Central"/>
</dbReference>
<dbReference type="GO" id="GO:0000978">
    <property type="term" value="F:RNA polymerase II cis-regulatory region sequence-specific DNA binding"/>
    <property type="evidence" value="ECO:0000318"/>
    <property type="project" value="GO_Central"/>
</dbReference>
<dbReference type="GO" id="GO:0043565">
    <property type="term" value="F:sequence-specific DNA binding"/>
    <property type="evidence" value="ECO:0000314"/>
    <property type="project" value="WormBase"/>
</dbReference>
<dbReference type="GO" id="GO:0009653">
    <property type="term" value="P:anatomical structure morphogenesis"/>
    <property type="evidence" value="ECO:0000318"/>
    <property type="project" value="GO_Central"/>
</dbReference>
<dbReference type="GO" id="GO:0030154">
    <property type="term" value="P:cell differentiation"/>
    <property type="evidence" value="ECO:0000318"/>
    <property type="project" value="GO_Central"/>
</dbReference>
<dbReference type="GO" id="GO:0008406">
    <property type="term" value="P:gonad development"/>
    <property type="evidence" value="ECO:0000316"/>
    <property type="project" value="UniProtKB"/>
</dbReference>
<dbReference type="GO" id="GO:0019100">
    <property type="term" value="P:male germ-line sex determination"/>
    <property type="evidence" value="ECO:0000316"/>
    <property type="project" value="WormBase"/>
</dbReference>
<dbReference type="GO" id="GO:0008584">
    <property type="term" value="P:male gonad development"/>
    <property type="evidence" value="ECO:0000315"/>
    <property type="project" value="WormBase"/>
</dbReference>
<dbReference type="GO" id="GO:0006357">
    <property type="term" value="P:regulation of transcription by RNA polymerase II"/>
    <property type="evidence" value="ECO:0000318"/>
    <property type="project" value="GO_Central"/>
</dbReference>
<dbReference type="CDD" id="cd20028">
    <property type="entry name" value="FH_FOXL2"/>
    <property type="match status" value="1"/>
</dbReference>
<dbReference type="FunFam" id="1.10.10.10:FF:000598">
    <property type="entry name" value="forkhead box protein I1 isoform X2"/>
    <property type="match status" value="1"/>
</dbReference>
<dbReference type="Gene3D" id="1.10.10.10">
    <property type="entry name" value="Winged helix-like DNA-binding domain superfamily/Winged helix DNA-binding domain"/>
    <property type="match status" value="1"/>
</dbReference>
<dbReference type="InterPro" id="IPR047515">
    <property type="entry name" value="FH_FOXL2"/>
</dbReference>
<dbReference type="InterPro" id="IPR001766">
    <property type="entry name" value="Fork_head_dom"/>
</dbReference>
<dbReference type="InterPro" id="IPR050211">
    <property type="entry name" value="FOX_domain-containing"/>
</dbReference>
<dbReference type="InterPro" id="IPR018122">
    <property type="entry name" value="TF_fork_head_CS_1"/>
</dbReference>
<dbReference type="InterPro" id="IPR030456">
    <property type="entry name" value="TF_fork_head_CS_2"/>
</dbReference>
<dbReference type="InterPro" id="IPR036388">
    <property type="entry name" value="WH-like_DNA-bd_sf"/>
</dbReference>
<dbReference type="InterPro" id="IPR036390">
    <property type="entry name" value="WH_DNA-bd_sf"/>
</dbReference>
<dbReference type="PANTHER" id="PTHR11829:SF388">
    <property type="entry name" value="FORK HEAD DOMAIN-CONTAINING PROTEIN L1-RELATED"/>
    <property type="match status" value="1"/>
</dbReference>
<dbReference type="PANTHER" id="PTHR11829">
    <property type="entry name" value="FORKHEAD BOX PROTEIN"/>
    <property type="match status" value="1"/>
</dbReference>
<dbReference type="Pfam" id="PF00250">
    <property type="entry name" value="Forkhead"/>
    <property type="match status" value="1"/>
</dbReference>
<dbReference type="PRINTS" id="PR00053">
    <property type="entry name" value="FORKHEAD"/>
</dbReference>
<dbReference type="SMART" id="SM00339">
    <property type="entry name" value="FH"/>
    <property type="match status" value="1"/>
</dbReference>
<dbReference type="SUPFAM" id="SSF46785">
    <property type="entry name" value="Winged helix' DNA-binding domain"/>
    <property type="match status" value="1"/>
</dbReference>
<dbReference type="PROSITE" id="PS00657">
    <property type="entry name" value="FORK_HEAD_1"/>
    <property type="match status" value="1"/>
</dbReference>
<dbReference type="PROSITE" id="PS00658">
    <property type="entry name" value="FORK_HEAD_2"/>
    <property type="match status" value="1"/>
</dbReference>
<dbReference type="PROSITE" id="PS50039">
    <property type="entry name" value="FORK_HEAD_3"/>
    <property type="match status" value="1"/>
</dbReference>
<proteinExistence type="evidence at protein level"/>
<sequence>MTRHQTHLPFHIVQEGNSIDKPPYSYVALIAMAIDASPDKRMTLNQIYKFIEAKFPYYRDADAKRKQGWQNSIRHNLSLNDCFVKKARDGQSCANDRKGNYWQMVADNAPQFDNGNFKRRRVKRLGIGKMGYANTTETTETGTILQQQLPFFNGLKWPQNIQTMDPFQFFKFQYPNSITDSANTSQINNSSSSSSSFDTSIYTSAFPIPTSHFDTNLVAPSQPPPVVSDVEVVPSDTVKEEVLVDMKPLIPGISSTTFLTSLQMTDPRSIEQQQLLSTASNMYPNAFMPPYTNWSCQPTTTFTGLSFDDPSLYGYGQQFPASS</sequence>
<accession>Q10924</accession>
<comment type="function">
    <text evidence="2 3">Probable transcription factor (PubMed:14993191, PubMed:20553900). Binds to the DNA sequence motif 5'-[TA]TGTT[TG]T[TG][ATG]TT-3' (PubMed:20553900). Regulates sexual dimorphism in the gonad, promoting male gonadal cell fates in chromosomally (XO) male animals, yet plays a role in gonadogenesis in both sexes; probably acts downstream of terminal regulator of sex determination tra-1, to control early gonadogenesis (PubMed:14993191). Positively modulates expression of homeobox protein egl-5, probably acting indirectly, during early gonadal development (PubMed:20553900).</text>
</comment>
<comment type="subcellular location">
    <subcellularLocation>
        <location evidence="1">Nucleus</location>
    </subcellularLocation>
</comment>
<comment type="developmental stage">
    <text evidence="2">Expressed in the somatic gonadal precursor cells, Z1 and Z4, of XO and XX L1 stage larvae (PubMed:14993191). Expression is sexually dimorphic later in larval L1 stage and appears to be gonad-specific (PubMed:14993191).</text>
</comment>
<evidence type="ECO:0000255" key="1">
    <source>
        <dbReference type="PROSITE-ProRule" id="PRU00089"/>
    </source>
</evidence>
<evidence type="ECO:0000269" key="2">
    <source>
    </source>
</evidence>
<evidence type="ECO:0000269" key="3">
    <source>
    </source>
</evidence>
<evidence type="ECO:0000305" key="4"/>
<evidence type="ECO:0000312" key="5">
    <source>
        <dbReference type="Proteomes" id="UP000001940"/>
    </source>
</evidence>
<evidence type="ECO:0000312" key="6">
    <source>
        <dbReference type="WormBase" id="B0286.5"/>
    </source>
</evidence>
<gene>
    <name evidence="6" type="primary">fkh-6</name>
    <name evidence="6" type="ORF">B0286.5</name>
</gene>
<reference evidence="5" key="1">
    <citation type="journal article" date="1998" name="Science">
        <title>Genome sequence of the nematode C. elegans: a platform for investigating biology.</title>
        <authorList>
            <consortium name="The C. elegans sequencing consortium"/>
        </authorList>
    </citation>
    <scope>NUCLEOTIDE SEQUENCE [LARGE SCALE GENOMIC DNA]</scope>
    <source>
        <strain evidence="5">Bristol N2</strain>
    </source>
</reference>
<reference evidence="4" key="2">
    <citation type="journal article" date="2004" name="Development">
        <title>A forkhead protein controls sexual identity of the C. elegans male somatic gonad.</title>
        <authorList>
            <person name="Chang W."/>
            <person name="Tilmann C."/>
            <person name="Thoemke K."/>
            <person name="Markussen F.H."/>
            <person name="Mathies L.D."/>
            <person name="Kimble J."/>
            <person name="Zarkower D."/>
        </authorList>
    </citation>
    <scope>FUNCTION</scope>
    <scope>DEVELOPMENTAL STAGE</scope>
    <scope>MUTAGENESIS OF MET-1</scope>
</reference>
<reference evidence="4" key="3">
    <citation type="journal article" date="2010" name="Dev. Biol.">
        <title>EGL-5/ABD-B plays an instructive role in male cell fate determination in the C. elegans somatic gonad.</title>
        <authorList>
            <person name="Kalis A.K."/>
            <person name="Murphy M.W."/>
            <person name="Zarkower D."/>
        </authorList>
    </citation>
    <scope>FUNCTION</scope>
</reference>
<organism evidence="5">
    <name type="scientific">Caenorhabditis elegans</name>
    <dbReference type="NCBI Taxonomy" id="6239"/>
    <lineage>
        <taxon>Eukaryota</taxon>
        <taxon>Metazoa</taxon>
        <taxon>Ecdysozoa</taxon>
        <taxon>Nematoda</taxon>
        <taxon>Chromadorea</taxon>
        <taxon>Rhabditida</taxon>
        <taxon>Rhabditina</taxon>
        <taxon>Rhabditomorpha</taxon>
        <taxon>Rhabditoidea</taxon>
        <taxon>Rhabditidae</taxon>
        <taxon>Peloderinae</taxon>
        <taxon>Caenorhabditis</taxon>
    </lineage>
</organism>
<keyword id="KW-0238">DNA-binding</keyword>
<keyword id="KW-0539">Nucleus</keyword>
<keyword id="KW-1185">Reference proteome</keyword>